<feature type="chain" id="PRO_0000133502" description="Major capsid protein L1">
    <location>
        <begin position="1"/>
        <end position="568"/>
    </location>
</feature>
<feature type="region of interest" description="Disordered" evidence="2">
    <location>
        <begin position="537"/>
        <end position="568"/>
    </location>
</feature>
<feature type="compositionally biased region" description="Basic residues" evidence="2">
    <location>
        <begin position="537"/>
        <end position="548"/>
    </location>
</feature>
<feature type="compositionally biased region" description="Basic residues" evidence="2">
    <location>
        <begin position="558"/>
        <end position="568"/>
    </location>
</feature>
<feature type="disulfide bond" description="Interchain (with C-490)" evidence="1">
    <location>
        <position position="236"/>
    </location>
</feature>
<feature type="disulfide bond" description="Interchain (with C-236)" evidence="1">
    <location>
        <position position="490"/>
    </location>
</feature>
<feature type="sequence conflict" description="In Ref. 2; AAA47026." evidence="3" ref="2">
    <original>V</original>
    <variation>I</variation>
    <location>
        <position position="384"/>
    </location>
</feature>
<feature type="helix" evidence="5">
    <location>
        <begin position="85"/>
        <end position="87"/>
    </location>
</feature>
<feature type="strand" evidence="5">
    <location>
        <begin position="90"/>
        <end position="99"/>
    </location>
</feature>
<feature type="strand" evidence="5">
    <location>
        <begin position="103"/>
        <end position="111"/>
    </location>
</feature>
<feature type="strand" evidence="5">
    <location>
        <begin position="117"/>
        <end position="121"/>
    </location>
</feature>
<feature type="strand" evidence="5">
    <location>
        <begin position="128"/>
        <end position="130"/>
    </location>
</feature>
<feature type="strand" evidence="5">
    <location>
        <begin position="132"/>
        <end position="137"/>
    </location>
</feature>
<feature type="strand" evidence="4">
    <location>
        <begin position="141"/>
        <end position="144"/>
    </location>
</feature>
<feature type="turn" evidence="5">
    <location>
        <begin position="154"/>
        <end position="156"/>
    </location>
</feature>
<feature type="strand" evidence="5">
    <location>
        <begin position="157"/>
        <end position="170"/>
    </location>
</feature>
<feature type="strand" evidence="5">
    <location>
        <begin position="179"/>
        <end position="184"/>
    </location>
</feature>
<feature type="turn" evidence="4">
    <location>
        <begin position="190"/>
        <end position="192"/>
    </location>
</feature>
<feature type="strand" evidence="5">
    <location>
        <begin position="206"/>
        <end position="210"/>
    </location>
</feature>
<feature type="strand" evidence="5">
    <location>
        <begin position="214"/>
        <end position="223"/>
    </location>
</feature>
<feature type="strand" evidence="5">
    <location>
        <begin position="226"/>
        <end position="232"/>
    </location>
</feature>
<feature type="strand" evidence="5">
    <location>
        <begin position="237"/>
        <end position="239"/>
    </location>
</feature>
<feature type="strand" evidence="5">
    <location>
        <begin position="249"/>
        <end position="255"/>
    </location>
</feature>
<feature type="strand" evidence="5">
    <location>
        <begin position="268"/>
        <end position="270"/>
    </location>
</feature>
<feature type="helix" evidence="5">
    <location>
        <begin position="271"/>
        <end position="274"/>
    </location>
</feature>
<feature type="strand" evidence="4">
    <location>
        <begin position="275"/>
        <end position="278"/>
    </location>
</feature>
<feature type="strand" evidence="5">
    <location>
        <begin position="285"/>
        <end position="293"/>
    </location>
</feature>
<feature type="helix" evidence="5">
    <location>
        <begin position="295"/>
        <end position="300"/>
    </location>
</feature>
<feature type="strand" evidence="5">
    <location>
        <begin position="308"/>
        <end position="316"/>
    </location>
</feature>
<feature type="strand" evidence="4">
    <location>
        <begin position="320"/>
        <end position="323"/>
    </location>
</feature>
<feature type="strand" evidence="5">
    <location>
        <begin position="326"/>
        <end position="330"/>
    </location>
</feature>
<feature type="helix" evidence="5">
    <location>
        <begin position="334"/>
        <end position="336"/>
    </location>
</feature>
<feature type="helix" evidence="5">
    <location>
        <begin position="342"/>
        <end position="344"/>
    </location>
</feature>
<feature type="strand" evidence="4">
    <location>
        <begin position="352"/>
        <end position="355"/>
    </location>
</feature>
<feature type="strand" evidence="5">
    <location>
        <begin position="361"/>
        <end position="363"/>
    </location>
</feature>
<feature type="strand" evidence="5">
    <location>
        <begin position="368"/>
        <end position="370"/>
    </location>
</feature>
<feature type="strand" evidence="5">
    <location>
        <begin position="378"/>
        <end position="380"/>
    </location>
</feature>
<feature type="strand" evidence="5">
    <location>
        <begin position="383"/>
        <end position="385"/>
    </location>
</feature>
<feature type="helix" evidence="5">
    <location>
        <begin position="386"/>
        <end position="388"/>
    </location>
</feature>
<feature type="strand" evidence="5">
    <location>
        <begin position="389"/>
        <end position="396"/>
    </location>
</feature>
<feature type="strand" evidence="5">
    <location>
        <begin position="403"/>
        <end position="412"/>
    </location>
</feature>
<feature type="helix" evidence="5">
    <location>
        <begin position="419"/>
        <end position="421"/>
    </location>
</feature>
<feature type="strand" evidence="5">
    <location>
        <begin position="422"/>
        <end position="444"/>
    </location>
</feature>
<feature type="helix" evidence="5">
    <location>
        <begin position="447"/>
        <end position="456"/>
    </location>
</feature>
<feature type="helix" evidence="5">
    <location>
        <begin position="458"/>
        <end position="463"/>
    </location>
</feature>
<feature type="turn" evidence="5">
    <location>
        <begin position="502"/>
        <end position="505"/>
    </location>
</feature>
<feature type="strand" evidence="5">
    <location>
        <begin position="509"/>
        <end position="512"/>
    </location>
</feature>
<feature type="helix" evidence="5">
    <location>
        <begin position="521"/>
        <end position="523"/>
    </location>
</feature>
<feature type="helix" evidence="5">
    <location>
        <begin position="525"/>
        <end position="534"/>
    </location>
</feature>
<dbReference type="EMBL" id="X05015">
    <property type="protein sequence ID" value="CAA28671.1"/>
    <property type="molecule type" value="Genomic_DNA"/>
</dbReference>
<dbReference type="EMBL" id="M96287">
    <property type="protein sequence ID" value="AAA47026.1"/>
    <property type="molecule type" value="Genomic_DNA"/>
</dbReference>
<dbReference type="EMBL" id="M14710">
    <property type="protein sequence ID" value="AAA65508.1"/>
    <property type="molecule type" value="Genomic_DNA"/>
</dbReference>
<dbReference type="EMBL" id="A06329">
    <property type="protein sequence ID" value="CAA00545.1"/>
    <property type="molecule type" value="Unassigned_DNA"/>
</dbReference>
<dbReference type="PIR" id="A26251">
    <property type="entry name" value="P1WL18"/>
</dbReference>
<dbReference type="RefSeq" id="NP_040317.1">
    <property type="nucleotide sequence ID" value="NC_001357.1"/>
</dbReference>
<dbReference type="PDB" id="2R5I">
    <property type="method" value="X-ray"/>
    <property type="resolution" value="3.40 A"/>
    <property type="chains" value="A/B/C/D/E/F/G/H/I/J/K/L/M/N/O=82-465, A/B/C/D/E/F/G/H/I/J/K/L/M/N/O=499-536"/>
</dbReference>
<dbReference type="PDB" id="5W1X">
    <property type="method" value="X-ray"/>
    <property type="resolution" value="3.37 A"/>
    <property type="chains" value="A/B/C/D/E/F/G/H/I/J/K/L/M/N/O=82-465, A/B/C/D/E/F/G/H/I/J/K/L/M/N/O=499-535"/>
</dbReference>
<dbReference type="PDBsum" id="2R5I"/>
<dbReference type="PDBsum" id="5W1X"/>
<dbReference type="SMR" id="P06794"/>
<dbReference type="ChEMBL" id="CHEMBL3562174"/>
<dbReference type="DNASU" id="1489090"/>
<dbReference type="GeneID" id="1489090"/>
<dbReference type="KEGG" id="vg:1489090"/>
<dbReference type="EvolutionaryTrace" id="P06794"/>
<dbReference type="Proteomes" id="UP000009109">
    <property type="component" value="Genome"/>
</dbReference>
<dbReference type="GO" id="GO:0042025">
    <property type="term" value="C:host cell nucleus"/>
    <property type="evidence" value="ECO:0007669"/>
    <property type="project" value="UniProtKB-SubCell"/>
</dbReference>
<dbReference type="GO" id="GO:0039620">
    <property type="term" value="C:T=7 icosahedral viral capsid"/>
    <property type="evidence" value="ECO:0007669"/>
    <property type="project" value="UniProtKB-UniRule"/>
</dbReference>
<dbReference type="GO" id="GO:0005198">
    <property type="term" value="F:structural molecule activity"/>
    <property type="evidence" value="ECO:0007669"/>
    <property type="project" value="UniProtKB-UniRule"/>
</dbReference>
<dbReference type="GO" id="GO:0075509">
    <property type="term" value="P:endocytosis involved in viral entry into host cell"/>
    <property type="evidence" value="ECO:0007669"/>
    <property type="project" value="UniProtKB-KW"/>
</dbReference>
<dbReference type="GO" id="GO:0019062">
    <property type="term" value="P:virion attachment to host cell"/>
    <property type="evidence" value="ECO:0007669"/>
    <property type="project" value="UniProtKB-UniRule"/>
</dbReference>
<dbReference type="Gene3D" id="2.60.175.20">
    <property type="entry name" value="Major capsid L1 (late) superfamily, Papillomavirus"/>
    <property type="match status" value="2"/>
</dbReference>
<dbReference type="HAMAP" id="MF_04002">
    <property type="entry name" value="PPV_L1"/>
    <property type="match status" value="1"/>
</dbReference>
<dbReference type="InterPro" id="IPR002210">
    <property type="entry name" value="Capsid_L1_Papillomavir"/>
</dbReference>
<dbReference type="InterPro" id="IPR036973">
    <property type="entry name" value="Capsid_L1_sf_Papillomavir"/>
</dbReference>
<dbReference type="InterPro" id="IPR011222">
    <property type="entry name" value="dsDNA_vir_gr_I_capsid"/>
</dbReference>
<dbReference type="Pfam" id="PF00500">
    <property type="entry name" value="Late_protein_L1"/>
    <property type="match status" value="1"/>
</dbReference>
<dbReference type="PRINTS" id="PR00865">
    <property type="entry name" value="HPVCAPSIDL1"/>
</dbReference>
<dbReference type="SUPFAM" id="SSF88648">
    <property type="entry name" value="Group I dsDNA viruses"/>
    <property type="match status" value="1"/>
</dbReference>
<proteinExistence type="evidence at protein level"/>
<accession>P06794</accession>
<accession>Q84270</accession>
<sequence>MCLYTRVLILHYHLLPLYGPLYHPRPLPLHSILVYMVHIIICGHYIILFLRNVNVFPIFLQMALWRPSDNTVYLPPPSVARVVNTDDYVTPTSIFYHAGSSRLLTVGNPYFRVPAGGGNKQDIPKVSAYQYRVFRVQLPDPNKFGLPDTSIYNPETQRLVWACAGVEIGRGQPLGVGLSGHPFYNKLDDTESSHAATSNVSEDVRDNVSVDYKQTQLCILGCAPAIGEHWAKGTACKSRPLSQGDCPPLELKNTVLEDGDMVDTGYGAMDFSTLQDTKCEVPLDICQSICKYPDYLQMSADPYGDSMFFCLRREQLFARHFWNRAGTMGDTVPQSLYIKGTGMPASPGSCVYSPSPSGSIVTSDSQLFNKPYWLHKAQGHNNGVCWHNQLFVTVVDTTPSTNLTICASTQSPVPGQYDATKFKQYSRHVEEYDLQFIFQLCTITLTADVMSYIHSMNSSILEDWNFGVPPPPTTSLVDTYRFVQSVAITCQKDAAPAENKDPYDKLKFWNVDLKEKFSLDLDQYPLGRKFLVQAGLRRKPTIGPRKRSAPSATTSSKPAKRVRVRARK</sequence>
<organism>
    <name type="scientific">Human papillomavirus type 18</name>
    <dbReference type="NCBI Taxonomy" id="333761"/>
    <lineage>
        <taxon>Viruses</taxon>
        <taxon>Monodnaviria</taxon>
        <taxon>Shotokuvirae</taxon>
        <taxon>Cossaviricota</taxon>
        <taxon>Papovaviricetes</taxon>
        <taxon>Zurhausenvirales</taxon>
        <taxon>Papillomaviridae</taxon>
        <taxon>Firstpapillomavirinae</taxon>
        <taxon>Alphapapillomavirus</taxon>
        <taxon>Alphapapillomavirus 7</taxon>
    </lineage>
</organism>
<organismHost>
    <name type="scientific">Homo sapiens</name>
    <name type="common">Human</name>
    <dbReference type="NCBI Taxonomy" id="9606"/>
</organismHost>
<gene>
    <name evidence="1" type="primary">L1</name>
</gene>
<evidence type="ECO:0000255" key="1">
    <source>
        <dbReference type="HAMAP-Rule" id="MF_04002"/>
    </source>
</evidence>
<evidence type="ECO:0000256" key="2">
    <source>
        <dbReference type="SAM" id="MobiDB-lite"/>
    </source>
</evidence>
<evidence type="ECO:0000305" key="3"/>
<evidence type="ECO:0007829" key="4">
    <source>
        <dbReference type="PDB" id="2R5I"/>
    </source>
</evidence>
<evidence type="ECO:0007829" key="5">
    <source>
        <dbReference type="PDB" id="5W1X"/>
    </source>
</evidence>
<comment type="function">
    <text evidence="1">Forms an icosahedral capsid with a T=7 symmetry and a 50 nm diameter. The capsid is composed of 72 pentamers linked to each other by disulfide bonds and associated with L2 proteins. Binds to heparan sulfate proteoglycans on cell surface of basal layer keratinocytes to provide initial virion attachment. This binding mediates a conformational change in the virus capsid that facilitates efficient infection. The virion enters the host cell via endocytosis. During virus trafficking, L1 protein dissociates from the viral DNA and the genomic DNA is released to the host nucleus. The virion assembly takes place within the cell nucleus. Encapsulates the genomic DNA together with protein L2.</text>
</comment>
<comment type="subunit">
    <text evidence="1">Self-assembles into homopentamers. The capsid has an icosahedral symmetry and consists of 72 capsomers, with each capsomer being a pentamer of L1. Interacts with the minor capsid protein L2; this interaction is necessary for viral genome encapsidation. Interacts with protein E2; this interaction enhances E2-dependent replication and transcription activation.</text>
</comment>
<comment type="subcellular location">
    <subcellularLocation>
        <location evidence="1">Virion</location>
    </subcellularLocation>
    <subcellularLocation>
        <location evidence="1">Host nucleus</location>
    </subcellularLocation>
</comment>
<comment type="similarity">
    <text evidence="1">Belongs to the papillomaviridae L1 protein family.</text>
</comment>
<keyword id="KW-0002">3D-structure</keyword>
<keyword id="KW-0167">Capsid protein</keyword>
<keyword id="KW-1015">Disulfide bond</keyword>
<keyword id="KW-1048">Host nucleus</keyword>
<keyword id="KW-0945">Host-virus interaction</keyword>
<keyword id="KW-0426">Late protein</keyword>
<keyword id="KW-1185">Reference proteome</keyword>
<keyword id="KW-1145">T=7 icosahedral capsid protein</keyword>
<keyword id="KW-1161">Viral attachment to host cell</keyword>
<keyword id="KW-1162">Viral penetration into host cytoplasm</keyword>
<keyword id="KW-0946">Virion</keyword>
<keyword id="KW-1164">Virus endocytosis by host</keyword>
<keyword id="KW-1160">Virus entry into host cell</keyword>
<reference key="1">
    <citation type="journal article" date="1987" name="J. Mol. Biol.">
        <title>Nucleotide sequence and comparative analysis of the human papillomavirus type 18 genome. Phylogeny of papillomaviruses and repeated structure of the E6 and E7 gene products.</title>
        <authorList>
            <person name="Cole S.T."/>
            <person name="Danos O."/>
        </authorList>
    </citation>
    <scope>NUCLEOTIDE SEQUENCE [GENOMIC DNA]</scope>
</reference>
<reference key="2">
    <citation type="journal article" date="1992" name="J. Virol.">
        <title>Phylogenetic analysis of 48 papillomavirus types and 28 subtypes and variants: a showcase for the molecular evolution of DNA viruses.</title>
        <authorList>
            <person name="Chan S.-Y."/>
            <person name="Bernard H.U."/>
            <person name="Ong C.K."/>
            <person name="Chan S.P."/>
            <person name="Birgit H."/>
            <person name="Delius H."/>
        </authorList>
    </citation>
    <scope>NUCLEOTIDE SEQUENCE [GENOMIC DNA] OF 363-406</scope>
</reference>
<reference key="3">
    <citation type="journal article" date="1987" name="J. Virol.">
        <title>Characterization of a transcriptional promoter of human papillomavirus 18 and modulation of its expression by simian virus 40 and adenovirus early antigens.</title>
        <authorList>
            <person name="Thierry F."/>
            <person name="Heard J.-M."/>
            <person name="Dartmann K."/>
            <person name="Yaniv M."/>
        </authorList>
    </citation>
    <scope>NUCLEOTIDE SEQUENCE [GENOMIC DNA] OF 501-568</scope>
</reference>
<name>VL1_HPV18</name>
<protein>
    <recommendedName>
        <fullName evidence="1">Major capsid protein L1</fullName>
    </recommendedName>
</protein>